<proteinExistence type="evidence at transcript level"/>
<sequence>MVMIHIFLTVMVVGGVSLFPETAEAIVMGPSMQKLTWHYYKVYNTCENAENFVRHQVEIFYKNDKSIAPKLLRLLYSDCFVSGCDASVLLEGPNSEKMAPQNRGLGGFVLIDKIKIVLEQRCPGVVSCADILNLATRDAVHLAGAPSYPVFTGRRDGLTSDKQTVDLPSPSISWDQAMSYFKSRGLNVLDMATLLGSHSMGRTHCSYVVDRLYNYNKTGKPSPTMNKYFLSEMAKQCPPRTRKGQTDPLVYLNPDSGSNHSFTSSFYSRILSNKSVLEVDQQLLYNDDTKQISKEFSEGFEDFRKSFALSMSKMGAINVLTKTEGEIRKDCRHIN</sequence>
<gene>
    <name type="primary">PER26</name>
    <name type="synonym">P26</name>
    <name type="ordered locus">At2g43480</name>
    <name type="ORF">T1O24.22</name>
</gene>
<comment type="function">
    <text evidence="4">Removal of H(2)O(2), oxidation of toxic reductants, biosynthesis and degradation of lignin, suberization, auxin catabolism, response to environmental stresses such as wounding, pathogen attack and oxidative stress (Probable). The enzyme activity has to be proved.</text>
</comment>
<comment type="catalytic activity">
    <reaction>
        <text>2 a phenolic donor + H2O2 = 2 a phenolic radical donor + 2 H2O</text>
        <dbReference type="Rhea" id="RHEA:56136"/>
        <dbReference type="ChEBI" id="CHEBI:15377"/>
        <dbReference type="ChEBI" id="CHEBI:16240"/>
        <dbReference type="ChEBI" id="CHEBI:139520"/>
        <dbReference type="ChEBI" id="CHEBI:139521"/>
        <dbReference type="EC" id="1.11.1.7"/>
    </reaction>
</comment>
<comment type="cofactor">
    <cofactor evidence="3">
        <name>heme b</name>
        <dbReference type="ChEBI" id="CHEBI:60344"/>
    </cofactor>
    <text evidence="3">Binds 1 heme b (iron(II)-protoporphyrin IX) group per subunit.</text>
</comment>
<comment type="cofactor">
    <cofactor evidence="3">
        <name>Ca(2+)</name>
        <dbReference type="ChEBI" id="CHEBI:29108"/>
    </cofactor>
    <text evidence="3">Binds 2 calcium ions per subunit.</text>
</comment>
<comment type="subcellular location">
    <subcellularLocation>
        <location evidence="3">Secreted</location>
    </subcellularLocation>
</comment>
<comment type="miscellaneous">
    <text>There are 73 peroxidase genes in A.thaliana.</text>
</comment>
<comment type="similarity">
    <text evidence="3">Belongs to the peroxidase family. Classical plant (class III) peroxidase subfamily.</text>
</comment>
<comment type="caution">
    <text evidence="4">Lacks the distal histidine (here Ser-77), present in the active site, which is one of the conserved features of the classical plant (class III) peroxidase family.</text>
</comment>
<comment type="sequence caution" evidence="4">
    <conflict type="erroneous initiation">
        <sequence resource="EMBL-CDS" id="AAB64327"/>
    </conflict>
</comment>
<evidence type="ECO:0000250" key="1"/>
<evidence type="ECO:0000255" key="2"/>
<evidence type="ECO:0000255" key="3">
    <source>
        <dbReference type="PROSITE-ProRule" id="PRU00297"/>
    </source>
</evidence>
<evidence type="ECO:0000305" key="4"/>
<feature type="signal peptide" evidence="2">
    <location>
        <begin position="1"/>
        <end position="18"/>
    </location>
</feature>
<feature type="chain" id="PRO_0000023692" description="Probable peroxidase 26">
    <location>
        <begin position="19"/>
        <end position="335"/>
    </location>
</feature>
<feature type="active site" evidence="1">
    <location>
        <position position="73"/>
    </location>
</feature>
<feature type="binding site" evidence="3">
    <location>
        <position position="78"/>
    </location>
    <ligand>
        <name>Ca(2+)</name>
        <dbReference type="ChEBI" id="CHEBI:29108"/>
        <label>1</label>
    </ligand>
</feature>
<feature type="binding site" evidence="3">
    <location>
        <position position="81"/>
    </location>
    <ligand>
        <name>Ca(2+)</name>
        <dbReference type="ChEBI" id="CHEBI:29108"/>
        <label>1</label>
    </ligand>
</feature>
<feature type="binding site" evidence="3">
    <location>
        <position position="83"/>
    </location>
    <ligand>
        <name>Ca(2+)</name>
        <dbReference type="ChEBI" id="CHEBI:29108"/>
        <label>1</label>
    </ligand>
</feature>
<feature type="binding site" evidence="3">
    <location>
        <position position="85"/>
    </location>
    <ligand>
        <name>Ca(2+)</name>
        <dbReference type="ChEBI" id="CHEBI:29108"/>
        <label>1</label>
    </ligand>
</feature>
<feature type="binding site" evidence="3">
    <location>
        <position position="87"/>
    </location>
    <ligand>
        <name>Ca(2+)</name>
        <dbReference type="ChEBI" id="CHEBI:29108"/>
        <label>1</label>
    </ligand>
</feature>
<feature type="binding site" evidence="3">
    <location>
        <position position="168"/>
    </location>
    <ligand>
        <name>substrate</name>
    </ligand>
</feature>
<feature type="binding site" description="axial binding residue" evidence="3">
    <location>
        <position position="198"/>
    </location>
    <ligand>
        <name>heme b</name>
        <dbReference type="ChEBI" id="CHEBI:60344"/>
    </ligand>
    <ligandPart>
        <name>Fe</name>
        <dbReference type="ChEBI" id="CHEBI:18248"/>
    </ligandPart>
</feature>
<feature type="binding site" evidence="3">
    <location>
        <position position="199"/>
    </location>
    <ligand>
        <name>Ca(2+)</name>
        <dbReference type="ChEBI" id="CHEBI:29108"/>
        <label>2</label>
    </ligand>
</feature>
<feature type="binding site" evidence="3">
    <location>
        <position position="255"/>
    </location>
    <ligand>
        <name>Ca(2+)</name>
        <dbReference type="ChEBI" id="CHEBI:29108"/>
        <label>2</label>
    </ligand>
</feature>
<feature type="binding site" evidence="3">
    <location>
        <position position="258"/>
    </location>
    <ligand>
        <name>Ca(2+)</name>
        <dbReference type="ChEBI" id="CHEBI:29108"/>
        <label>2</label>
    </ligand>
</feature>
<feature type="glycosylation site" description="N-linked (GlcNAc...) asparagine" evidence="2">
    <location>
        <position position="216"/>
    </location>
</feature>
<feature type="glycosylation site" description="N-linked (GlcNAc...) asparagine" evidence="2">
    <location>
        <position position="259"/>
    </location>
</feature>
<feature type="glycosylation site" description="N-linked (GlcNAc...) asparagine" evidence="2">
    <location>
        <position position="273"/>
    </location>
</feature>
<feature type="disulfide bond" evidence="3">
    <location>
        <begin position="46"/>
        <end position="122"/>
    </location>
</feature>
<feature type="disulfide bond" evidence="3">
    <location>
        <begin position="79"/>
        <end position="84"/>
    </location>
</feature>
<feature type="disulfide bond" evidence="3">
    <location>
        <begin position="128"/>
        <end position="331"/>
    </location>
</feature>
<feature type="disulfide bond" evidence="3">
    <location>
        <begin position="205"/>
        <end position="237"/>
    </location>
</feature>
<feature type="sequence conflict" description="In Ref. 3; AAL84934." evidence="4" ref="3">
    <original>V</original>
    <variation>I</variation>
    <location>
        <position position="140"/>
    </location>
</feature>
<feature type="sequence conflict" description="In Ref. 3; AAL84934." evidence="4" ref="3">
    <original>L</original>
    <variation>R</variation>
    <location>
        <position position="189"/>
    </location>
</feature>
<feature type="sequence conflict" description="In Ref. 3; AAL84934." evidence="4" ref="3">
    <original>V</original>
    <variation>A</variation>
    <location>
        <position position="208"/>
    </location>
</feature>
<feature type="sequence conflict" description="In Ref. 3; AAL84934." evidence="4" ref="3">
    <original>N</original>
    <variation>D</variation>
    <location>
        <position position="286"/>
    </location>
</feature>
<dbReference type="EC" id="1.11.1.7"/>
<dbReference type="EMBL" id="AC002335">
    <property type="protein sequence ID" value="AAB64327.1"/>
    <property type="status" value="ALT_INIT"/>
    <property type="molecule type" value="Genomic_DNA"/>
</dbReference>
<dbReference type="EMBL" id="CP002685">
    <property type="protein sequence ID" value="AEC10275.1"/>
    <property type="molecule type" value="Genomic_DNA"/>
</dbReference>
<dbReference type="EMBL" id="AY078928">
    <property type="protein sequence ID" value="AAL84934.1"/>
    <property type="molecule type" value="mRNA"/>
</dbReference>
<dbReference type="RefSeq" id="NP_181876.2">
    <property type="nucleotide sequence ID" value="NM_129909.3"/>
</dbReference>
<dbReference type="SMR" id="O22862"/>
<dbReference type="BioGRID" id="4285">
    <property type="interactions" value="1"/>
</dbReference>
<dbReference type="FunCoup" id="O22862">
    <property type="interactions" value="130"/>
</dbReference>
<dbReference type="STRING" id="3702.O22862"/>
<dbReference type="PeroxiBase" id="119">
    <property type="entry name" value="AtPrx26"/>
</dbReference>
<dbReference type="GlyCosmos" id="O22862">
    <property type="glycosylation" value="3 sites, No reported glycans"/>
</dbReference>
<dbReference type="GlyGen" id="O22862">
    <property type="glycosylation" value="3 sites"/>
</dbReference>
<dbReference type="iPTMnet" id="O22862"/>
<dbReference type="PaxDb" id="3702-AT2G43480.1"/>
<dbReference type="ProteomicsDB" id="236779"/>
<dbReference type="EnsemblPlants" id="AT2G43480.1">
    <property type="protein sequence ID" value="AT2G43480.1"/>
    <property type="gene ID" value="AT2G43480"/>
</dbReference>
<dbReference type="GeneID" id="818949"/>
<dbReference type="Gramene" id="AT2G43480.1">
    <property type="protein sequence ID" value="AT2G43480.1"/>
    <property type="gene ID" value="AT2G43480"/>
</dbReference>
<dbReference type="KEGG" id="ath:AT2G43480"/>
<dbReference type="Araport" id="AT2G43480"/>
<dbReference type="TAIR" id="AT2G43480"/>
<dbReference type="eggNOG" id="ENOG502QRTQ">
    <property type="taxonomic scope" value="Eukaryota"/>
</dbReference>
<dbReference type="HOGENOM" id="CLU_010543_0_3_1"/>
<dbReference type="InParanoid" id="O22862"/>
<dbReference type="OMA" id="SKMGAIN"/>
<dbReference type="PhylomeDB" id="O22862"/>
<dbReference type="BioCyc" id="ARA:AT2G43480-MONOMER"/>
<dbReference type="PRO" id="PR:O22862"/>
<dbReference type="Proteomes" id="UP000006548">
    <property type="component" value="Chromosome 2"/>
</dbReference>
<dbReference type="ExpressionAtlas" id="O22862">
    <property type="expression patterns" value="baseline and differential"/>
</dbReference>
<dbReference type="GO" id="GO:0005576">
    <property type="term" value="C:extracellular region"/>
    <property type="evidence" value="ECO:0007669"/>
    <property type="project" value="UniProtKB-SubCell"/>
</dbReference>
<dbReference type="GO" id="GO:0020037">
    <property type="term" value="F:heme binding"/>
    <property type="evidence" value="ECO:0007669"/>
    <property type="project" value="InterPro"/>
</dbReference>
<dbReference type="GO" id="GO:0140825">
    <property type="term" value="F:lactoperoxidase activity"/>
    <property type="evidence" value="ECO:0007669"/>
    <property type="project" value="UniProtKB-EC"/>
</dbReference>
<dbReference type="GO" id="GO:0046872">
    <property type="term" value="F:metal ion binding"/>
    <property type="evidence" value="ECO:0007669"/>
    <property type="project" value="UniProtKB-KW"/>
</dbReference>
<dbReference type="GO" id="GO:0042744">
    <property type="term" value="P:hydrogen peroxide catabolic process"/>
    <property type="evidence" value="ECO:0007669"/>
    <property type="project" value="InterPro"/>
</dbReference>
<dbReference type="GO" id="GO:0006979">
    <property type="term" value="P:response to oxidative stress"/>
    <property type="evidence" value="ECO:0007669"/>
    <property type="project" value="InterPro"/>
</dbReference>
<dbReference type="CDD" id="cd00693">
    <property type="entry name" value="secretory_peroxidase"/>
    <property type="match status" value="1"/>
</dbReference>
<dbReference type="FunFam" id="1.10.420.10:FF:000007">
    <property type="entry name" value="Peroxidase"/>
    <property type="match status" value="1"/>
</dbReference>
<dbReference type="Gene3D" id="1.10.520.10">
    <property type="match status" value="1"/>
</dbReference>
<dbReference type="Gene3D" id="1.10.420.10">
    <property type="entry name" value="Peroxidase, domain 2"/>
    <property type="match status" value="1"/>
</dbReference>
<dbReference type="InterPro" id="IPR002016">
    <property type="entry name" value="Haem_peroxidase"/>
</dbReference>
<dbReference type="InterPro" id="IPR010255">
    <property type="entry name" value="Haem_peroxidase_sf"/>
</dbReference>
<dbReference type="InterPro" id="IPR000823">
    <property type="entry name" value="Peroxidase_pln"/>
</dbReference>
<dbReference type="InterPro" id="IPR019793">
    <property type="entry name" value="Peroxidases_heam-ligand_BS"/>
</dbReference>
<dbReference type="InterPro" id="IPR033905">
    <property type="entry name" value="Secretory_peroxidase"/>
</dbReference>
<dbReference type="PANTHER" id="PTHR31235">
    <property type="entry name" value="PEROXIDASE 25-RELATED"/>
    <property type="match status" value="1"/>
</dbReference>
<dbReference type="Pfam" id="PF00141">
    <property type="entry name" value="peroxidase"/>
    <property type="match status" value="1"/>
</dbReference>
<dbReference type="PRINTS" id="PR00458">
    <property type="entry name" value="PEROXIDASE"/>
</dbReference>
<dbReference type="PRINTS" id="PR00461">
    <property type="entry name" value="PLPEROXIDASE"/>
</dbReference>
<dbReference type="SUPFAM" id="SSF48113">
    <property type="entry name" value="Heme-dependent peroxidases"/>
    <property type="match status" value="1"/>
</dbReference>
<dbReference type="PROSITE" id="PS00435">
    <property type="entry name" value="PEROXIDASE_1"/>
    <property type="match status" value="1"/>
</dbReference>
<dbReference type="PROSITE" id="PS50873">
    <property type="entry name" value="PEROXIDASE_4"/>
    <property type="match status" value="1"/>
</dbReference>
<keyword id="KW-0106">Calcium</keyword>
<keyword id="KW-1015">Disulfide bond</keyword>
<keyword id="KW-0325">Glycoprotein</keyword>
<keyword id="KW-0349">Heme</keyword>
<keyword id="KW-0408">Iron</keyword>
<keyword id="KW-0479">Metal-binding</keyword>
<keyword id="KW-0560">Oxidoreductase</keyword>
<keyword id="KW-0575">Peroxidase</keyword>
<keyword id="KW-1185">Reference proteome</keyword>
<keyword id="KW-0964">Secreted</keyword>
<keyword id="KW-0732">Signal</keyword>
<protein>
    <recommendedName>
        <fullName>Probable peroxidase 26</fullName>
        <shortName>Atperox P26</shortName>
        <ecNumber>1.11.1.7</ecNumber>
    </recommendedName>
    <alternativeName>
        <fullName>ATP50</fullName>
    </alternativeName>
</protein>
<accession>O22862</accession>
<accession>Q8RY36</accession>
<organism>
    <name type="scientific">Arabidopsis thaliana</name>
    <name type="common">Mouse-ear cress</name>
    <dbReference type="NCBI Taxonomy" id="3702"/>
    <lineage>
        <taxon>Eukaryota</taxon>
        <taxon>Viridiplantae</taxon>
        <taxon>Streptophyta</taxon>
        <taxon>Embryophyta</taxon>
        <taxon>Tracheophyta</taxon>
        <taxon>Spermatophyta</taxon>
        <taxon>Magnoliopsida</taxon>
        <taxon>eudicotyledons</taxon>
        <taxon>Gunneridae</taxon>
        <taxon>Pentapetalae</taxon>
        <taxon>rosids</taxon>
        <taxon>malvids</taxon>
        <taxon>Brassicales</taxon>
        <taxon>Brassicaceae</taxon>
        <taxon>Camelineae</taxon>
        <taxon>Arabidopsis</taxon>
    </lineage>
</organism>
<reference key="1">
    <citation type="journal article" date="1999" name="Nature">
        <title>Sequence and analysis of chromosome 2 of the plant Arabidopsis thaliana.</title>
        <authorList>
            <person name="Lin X."/>
            <person name="Kaul S."/>
            <person name="Rounsley S.D."/>
            <person name="Shea T.P."/>
            <person name="Benito M.-I."/>
            <person name="Town C.D."/>
            <person name="Fujii C.Y."/>
            <person name="Mason T.M."/>
            <person name="Bowman C.L."/>
            <person name="Barnstead M.E."/>
            <person name="Feldblyum T.V."/>
            <person name="Buell C.R."/>
            <person name="Ketchum K.A."/>
            <person name="Lee J.J."/>
            <person name="Ronning C.M."/>
            <person name="Koo H.L."/>
            <person name="Moffat K.S."/>
            <person name="Cronin L.A."/>
            <person name="Shen M."/>
            <person name="Pai G."/>
            <person name="Van Aken S."/>
            <person name="Umayam L."/>
            <person name="Tallon L.J."/>
            <person name="Gill J.E."/>
            <person name="Adams M.D."/>
            <person name="Carrera A.J."/>
            <person name="Creasy T.H."/>
            <person name="Goodman H.M."/>
            <person name="Somerville C.R."/>
            <person name="Copenhaver G.P."/>
            <person name="Preuss D."/>
            <person name="Nierman W.C."/>
            <person name="White O."/>
            <person name="Eisen J.A."/>
            <person name="Salzberg S.L."/>
            <person name="Fraser C.M."/>
            <person name="Venter J.C."/>
        </authorList>
    </citation>
    <scope>NUCLEOTIDE SEQUENCE [LARGE SCALE GENOMIC DNA]</scope>
    <source>
        <strain>cv. Columbia</strain>
    </source>
</reference>
<reference key="2">
    <citation type="journal article" date="2017" name="Plant J.">
        <title>Araport11: a complete reannotation of the Arabidopsis thaliana reference genome.</title>
        <authorList>
            <person name="Cheng C.Y."/>
            <person name="Krishnakumar V."/>
            <person name="Chan A.P."/>
            <person name="Thibaud-Nissen F."/>
            <person name="Schobel S."/>
            <person name="Town C.D."/>
        </authorList>
    </citation>
    <scope>GENOME REANNOTATION</scope>
    <source>
        <strain>cv. Columbia</strain>
    </source>
</reference>
<reference key="3">
    <citation type="journal article" date="2003" name="Science">
        <title>Empirical analysis of transcriptional activity in the Arabidopsis genome.</title>
        <authorList>
            <person name="Yamada K."/>
            <person name="Lim J."/>
            <person name="Dale J.M."/>
            <person name="Chen H."/>
            <person name="Shinn P."/>
            <person name="Palm C.J."/>
            <person name="Southwick A.M."/>
            <person name="Wu H.C."/>
            <person name="Kim C.J."/>
            <person name="Nguyen M."/>
            <person name="Pham P.K."/>
            <person name="Cheuk R.F."/>
            <person name="Karlin-Newmann G."/>
            <person name="Liu S.X."/>
            <person name="Lam B."/>
            <person name="Sakano H."/>
            <person name="Wu T."/>
            <person name="Yu G."/>
            <person name="Miranda M."/>
            <person name="Quach H.L."/>
            <person name="Tripp M."/>
            <person name="Chang C.H."/>
            <person name="Lee J.M."/>
            <person name="Toriumi M.J."/>
            <person name="Chan M.M."/>
            <person name="Tang C.C."/>
            <person name="Onodera C.S."/>
            <person name="Deng J.M."/>
            <person name="Akiyama K."/>
            <person name="Ansari Y."/>
            <person name="Arakawa T."/>
            <person name="Banh J."/>
            <person name="Banno F."/>
            <person name="Bowser L."/>
            <person name="Brooks S.Y."/>
            <person name="Carninci P."/>
            <person name="Chao Q."/>
            <person name="Choy N."/>
            <person name="Enju A."/>
            <person name="Goldsmith A.D."/>
            <person name="Gurjal M."/>
            <person name="Hansen N.F."/>
            <person name="Hayashizaki Y."/>
            <person name="Johnson-Hopson C."/>
            <person name="Hsuan V.W."/>
            <person name="Iida K."/>
            <person name="Karnes M."/>
            <person name="Khan S."/>
            <person name="Koesema E."/>
            <person name="Ishida J."/>
            <person name="Jiang P.X."/>
            <person name="Jones T."/>
            <person name="Kawai J."/>
            <person name="Kamiya A."/>
            <person name="Meyers C."/>
            <person name="Nakajima M."/>
            <person name="Narusaka M."/>
            <person name="Seki M."/>
            <person name="Sakurai T."/>
            <person name="Satou M."/>
            <person name="Tamse R."/>
            <person name="Vaysberg M."/>
            <person name="Wallender E.K."/>
            <person name="Wong C."/>
            <person name="Yamamura Y."/>
            <person name="Yuan S."/>
            <person name="Shinozaki K."/>
            <person name="Davis R.W."/>
            <person name="Theologis A."/>
            <person name="Ecker J.R."/>
        </authorList>
    </citation>
    <scope>NUCLEOTIDE SEQUENCE [LARGE SCALE MRNA]</scope>
    <source>
        <strain>cv. Columbia</strain>
    </source>
</reference>
<reference key="4">
    <citation type="journal article" date="2002" name="Gene">
        <title>Analysis and expression of the class III peroxidase large gene family in Arabidopsis thaliana.</title>
        <authorList>
            <person name="Tognolli M."/>
            <person name="Penel C."/>
            <person name="Greppin H."/>
            <person name="Simon P."/>
        </authorList>
    </citation>
    <scope>GENE FAMILY ORGANIZATION</scope>
    <scope>NOMENCLATURE</scope>
    <source>
        <strain>cv. Columbia</strain>
    </source>
</reference>
<name>PER26_ARATH</name>